<evidence type="ECO:0000256" key="1">
    <source>
        <dbReference type="SAM" id="MobiDB-lite"/>
    </source>
</evidence>
<evidence type="ECO:0000305" key="2"/>
<keyword id="KW-1185">Reference proteome</keyword>
<gene>
    <name type="ordered locus">CT_671</name>
</gene>
<comment type="interaction">
    <interactant intactId="EBI-6410708">
        <id>O84678</id>
    </interactant>
    <interactant intactId="EBI-6410694">
        <id>O84677</id>
        <label>CT_670</label>
    </interactant>
    <organismsDiffer>false</organismsDiffer>
    <experiments>2</experiments>
</comment>
<comment type="similarity">
    <text evidence="2">Belongs to the chlamydial CPn_0705/CT_671/TC_0042 family.</text>
</comment>
<dbReference type="EMBL" id="AE001273">
    <property type="protein sequence ID" value="AAC68266.1"/>
    <property type="molecule type" value="Genomic_DNA"/>
</dbReference>
<dbReference type="PIR" id="C71486">
    <property type="entry name" value="C71486"/>
</dbReference>
<dbReference type="RefSeq" id="NP_220190.1">
    <property type="nucleotide sequence ID" value="NC_000117.1"/>
</dbReference>
<dbReference type="SMR" id="O84678"/>
<dbReference type="IntAct" id="O84678">
    <property type="interactions" value="1"/>
</dbReference>
<dbReference type="STRING" id="272561.CT_671"/>
<dbReference type="EnsemblBacteria" id="AAC68266">
    <property type="protein sequence ID" value="AAC68266"/>
    <property type="gene ID" value="CT_671"/>
</dbReference>
<dbReference type="GeneID" id="884456"/>
<dbReference type="KEGG" id="ctr:CT_671"/>
<dbReference type="PATRIC" id="fig|272561.5.peg.738"/>
<dbReference type="HOGENOM" id="CLU_985881_0_0_0"/>
<dbReference type="InParanoid" id="O84678"/>
<dbReference type="OrthoDB" id="17909at2"/>
<dbReference type="Proteomes" id="UP000000431">
    <property type="component" value="Chromosome"/>
</dbReference>
<dbReference type="InterPro" id="IPR035359">
    <property type="entry name" value="DUF5421"/>
</dbReference>
<dbReference type="Pfam" id="PF17458">
    <property type="entry name" value="DUF5421"/>
    <property type="match status" value="1"/>
</dbReference>
<organism>
    <name type="scientific">Chlamydia trachomatis serovar D (strain ATCC VR-885 / DSM 19411 / UW-3/Cx)</name>
    <dbReference type="NCBI Taxonomy" id="272561"/>
    <lineage>
        <taxon>Bacteria</taxon>
        <taxon>Pseudomonadati</taxon>
        <taxon>Chlamydiota</taxon>
        <taxon>Chlamydiia</taxon>
        <taxon>Chlamydiales</taxon>
        <taxon>Chlamydiaceae</taxon>
        <taxon>Chlamydia/Chlamydophila group</taxon>
        <taxon>Chlamydia</taxon>
    </lineage>
</organism>
<accession>O84678</accession>
<proteinExistence type="evidence at protein level"/>
<feature type="chain" id="PRO_0000218414" description="Uncharacterized protein CT_671">
    <location>
        <begin position="1"/>
        <end position="283"/>
    </location>
</feature>
<feature type="region of interest" description="Disordered" evidence="1">
    <location>
        <begin position="1"/>
        <end position="99"/>
    </location>
</feature>
<feature type="region of interest" description="Disordered" evidence="1">
    <location>
        <begin position="255"/>
        <end position="283"/>
    </location>
</feature>
<feature type="compositionally biased region" description="Polar residues" evidence="1">
    <location>
        <begin position="1"/>
        <end position="10"/>
    </location>
</feature>
<feature type="compositionally biased region" description="Basic and acidic residues" evidence="1">
    <location>
        <begin position="14"/>
        <end position="34"/>
    </location>
</feature>
<feature type="compositionally biased region" description="Basic and acidic residues" evidence="1">
    <location>
        <begin position="42"/>
        <end position="53"/>
    </location>
</feature>
<feature type="compositionally biased region" description="Basic and acidic residues" evidence="1">
    <location>
        <begin position="61"/>
        <end position="71"/>
    </location>
</feature>
<reference key="1">
    <citation type="journal article" date="1998" name="Science">
        <title>Genome sequence of an obligate intracellular pathogen of humans: Chlamydia trachomatis.</title>
        <authorList>
            <person name="Stephens R.S."/>
            <person name="Kalman S."/>
            <person name="Lammel C.J."/>
            <person name="Fan J."/>
            <person name="Marathe R."/>
            <person name="Aravind L."/>
            <person name="Mitchell W.P."/>
            <person name="Olinger L."/>
            <person name="Tatusov R.L."/>
            <person name="Zhao Q."/>
            <person name="Koonin E.V."/>
            <person name="Davis R.W."/>
        </authorList>
    </citation>
    <scope>NUCLEOTIDE SEQUENCE [LARGE SCALE GENOMIC DNA]</scope>
    <source>
        <strain>ATCC VR-885 / DSM 19411 / UW-3/Cx</strain>
    </source>
</reference>
<name>Y671_CHLTR</name>
<sequence>MELNKTSESLFSAKIDHNHPRTEAHEPRDQREVRVFSLEGRSSTRQEKADRMPGRTSSRQESSKGSEEGAVHESTAGVSSKEEEESKGDGFFTGGNPTSGMALVETPMAVVSEAMVETSTMTVSQVDLQWVEQLVTSTVESLLVADIDGKQLVEIVLDNSNTVPAAFCGANLTLVQTGEEISVSFSNFVDQAQLTEATQLVQQNPKQLVSLVESLKARQLNLTELVVGNVAVSLPTIEKIETPLHMIAATIRHHDQEGDQEGEGRQDQHQGQHQEKKVEEAHI</sequence>
<protein>
    <recommendedName>
        <fullName>Uncharacterized protein CT_671</fullName>
    </recommendedName>
</protein>